<proteinExistence type="evidence at protein level"/>
<keyword id="KW-0002">3D-structure</keyword>
<keyword id="KW-0025">Alternative splicing</keyword>
<keyword id="KW-0963">Cytoplasm</keyword>
<keyword id="KW-0217">Developmental protein</keyword>
<keyword id="KW-0469">Meiosis</keyword>
<keyword id="KW-1185">Reference proteome</keyword>
<keyword id="KW-0677">Repeat</keyword>
<sequence>MGEQSHEKDHDEAHSYNPFVRSAVEYDADTRLQMAENAASARKLFVSSALKDIIVNPENFYHDFQQSAQMAEDANQRRQVSYNTKREAHIHQLKAQGLPLPSNIPMIEINPTRVTLNMEFESQYYSLMTSDNGDHENVASIMAETNTLIQLPDRSVGGTTPDPFAQQVTITGYFGDVDRARMLMRRNCHFTVFMALSKMKMPLHELQAHVRQNPIQNVEMSFVDAPEKNGIVTTYLRITAREKNQHELIEAAKRLNEILFRESPAPENNFTLHFTLSTYYVDQVLGSSSTAQLMPVIERETTTIISYPCYNNRNETRGNIYEIKVVGNIDNVLKARRYIMDLLPISMCFNIKNTDMAEPSRVSDRNIHMIIDESGIILKMTPSVYEPADLLSGEVPLNCASLRSKEFNIKKLYTAYQKVLSKKFDFIAPQPNDYDNSIWHHSLPANFLKNFNMPCRGELSDGSNGRRHRSSSIASSRSKHSYMSKGKQFSESSGGPSRSHTRVSSFSENSSTVPIMQFPTPHFAPPMLTPHHHMLKYVYLQQHQQAQTFLKGAAGLHPGTHIMFPPPIIVDGSFVSALPFADPVVFDGFPYVHGLFPVNEAEQHRNHRESSPSLRSTQEIRKPSRNMGNRPSSSTGSYYPSTTPRQRVYEQVREDDLRSHIGSRRTSVNGDDQNVESMHDQGYERQYPRQHQRLQKDDQQRWKTGSRGDIHSSRTINVHRDVRNSNEYDFHVGNSGPAKRSPSLEQVQLQMTHHLKLKSNDVDLDHEKLYMHESPHNDSDTTVSASGFGNDLMDGDFVQRFLSNANINESGRRPRTVSCFTEKDGQSARYIDSDGAYSVVDHASTHQSRSYDSFRKVGDNGVTKTILEPRARVEKDYGKISLEHKTKYSNEYGDEEKSAENDTSSLGSRQYRIDPMKLIASVRESSEQLPRIHERQFSDVLNEKEKEIADKSIESTVTQDLSLDETSTY</sequence>
<comment type="function">
    <text evidence="3 4 5 7">Required maternally for germline survival and embryogenesis. Forms a complex with gls-1 which promotes the oogenic cell fate by freeing the translational repressor fbf to repress sperm promoting factors. Promotes maturation of primary spermatocytes to mature sperm. Required during hermaphrodite development to promote sperm fate, which is critical for determining the normal number of sperm. Promotion of sperm fate is at the expense of oogenesis, possibly through the negative regulation of fbf. Required during male development for the continued production of sperm and inhibition of oogenesis. Together with gld-2, promotes the transition from mitosis to meiosis. Required for polyadenylation of neg-1 mRNA during embryogenesis (PubMed:26096734).</text>
</comment>
<comment type="subunit">
    <text evidence="2 3 4 5 6">Interacts (via its KH1 domain) with gld-2. Isoform A but not isoform B interacts specifically with fbf-1 and fbf-2 in an RNA-independent manner. Isoform A interacts with gls-1 isoform C.</text>
</comment>
<comment type="interaction">
    <interactant intactId="EBI-317828">
        <id>Q95ZK7</id>
    </interactant>
    <interactant intactId="EBI-2420017">
        <id>O17087</id>
        <label>gld-2</label>
    </interactant>
    <organismsDiffer>false</organismsDiffer>
    <experiments>2</experiments>
</comment>
<comment type="interaction">
    <interactant intactId="EBI-14989519">
        <id>Q95ZK7-1</id>
    </interactant>
    <interactant intactId="EBI-1569950">
        <id>Q9N5M6</id>
        <label>fbf-1</label>
    </interactant>
    <organismsDiffer>false</organismsDiffer>
    <experiments>2</experiments>
</comment>
<comment type="interaction">
    <interactant intactId="EBI-14989519">
        <id>Q95ZK7-1</id>
    </interactant>
    <interactant intactId="EBI-322416">
        <id>Q8I4M5</id>
        <label>gls-1</label>
    </interactant>
    <organismsDiffer>false</organismsDiffer>
    <experiments>3</experiments>
</comment>
<comment type="interaction">
    <interactant intactId="EBI-14989519">
        <id>Q95ZK7-1</id>
    </interactant>
    <interactant intactId="EBI-14989623">
        <id>Q8I4M5-3</id>
        <label>gls-1</label>
    </interactant>
    <organismsDiffer>false</organismsDiffer>
    <experiments>6</experiments>
</comment>
<comment type="subcellular location">
    <subcellularLocation>
        <location evidence="3 5">Cytoplasm</location>
    </subcellularLocation>
    <subcellularLocation>
        <location evidence="3 5">Cytoplasmic granule</location>
    </subcellularLocation>
    <subcellularLocation>
        <location evidence="3 5">Cytoplasm</location>
        <location evidence="3 5">Perinuclear region</location>
    </subcellularLocation>
    <text evidence="3 5">Localizes to P granules. Found also in particles near but not coincident with P granules.</text>
</comment>
<comment type="alternative products">
    <event type="alternative splicing"/>
    <isoform>
        <id>Q95ZK7-1</id>
        <name evidence="3 8">a</name>
        <name evidence="9">GLD-3L</name>
        <sequence type="displayed"/>
    </isoform>
    <isoform>
        <id>Q95ZK7-2</id>
        <name evidence="3 8">b</name>
        <name evidence="9">GLD-3S</name>
        <sequence type="described" ref="VSP_043966"/>
    </isoform>
    <text evidence="11">Additional isoforms seem to exist. Experimental confirmation may be lacking for some isoforms.</text>
</comment>
<comment type="tissue specificity">
    <text evidence="3 5">Expressed in the germline (at protein level). In adult hermaphrodites, first detected in the transition zone (TZ), weakly expressed in the early mitotic region and in pachytene germ cells, and becomes more abundantly expressed as germ cells enter diakinesis (at protein level). Expressed in primary spermatocytes, but not in secondary spermatocytes or adult sperm (at protein level).</text>
</comment>
<comment type="developmental stage">
    <text evidence="3 5">Expressed both maternally and zygotically throughout development and in adult hermaphrodites and males (at protein level).</text>
</comment>
<comment type="disruption phenotype">
    <text evidence="3 4 7">Loss of both maternal and zygotic expression causes variable lethality, ranging from arrest during embryonic development to soon after hatching, and sterility due to early germline defects. In these animals the germline precursor cells Z2 and Z3 are smaller, divide more slowly and their descendants remain small and indistinct compared to their wild-type counterparts. In addition, some of these animals show somatic defects, including a protruding vulva, multiple vulvae or a reduction in animal size. In zygotic mutant adult hermaphrodites, most spermatogenic cells are blocked as primary spermatocytes, the number of spermatocytes appears lower than normal and spermatogenesis is delayed by several hours. Zygotic mutant homozygous adult males produce some spermatogenic cells, although these sperm are less well defined morphologically than normal. In addition, loss of maternal and zygotic expression results in adult males that produce enlarged granular cells that appear oocyte-like and show chromosomal bivalents typical of oocytes. In zygotic mutants the mitotic region is longer and has more nuclei than normal, the mitotic region/TZ boundary is shifted from 20 to an average of 27 or 28 nuclei and the boundaries between mitotic region and TZ and TZ and pachytene region are not sharp as in wild-type. RNAi-mediated knockdown leads to a shorter polyadenylation tail in neg-1 mRNA in embryos (PubMed:26096734).</text>
</comment>
<comment type="miscellaneous">
    <text evidence="3 4">The deletion mutant gld-3 (q730) makes no detectable GLD-3; it is predicted to generate an mRNA with a premature stop codon, which should be subject to NMD. The deletion mutant gld-3 (q741) removes the fbf-binding site from isoform A, but leaves the gld-2-binding site intact. Animals homozygous for gld-3 (7q41) enter meiosis, but are feminized. In addition, gld-3 protein that retains its gld-2-binding region, does not have the dramatic mitosis/meiosis delay seen in gld-3 null mutants. By contrast, sex determination was not normal; gld-3 (q741) males produced oocytes. Therefore, promotes meiosis primarily via its interaction with gld-2 whereas the sperm/oocyte decision relies on its interaction with fbf.</text>
</comment>
<protein>
    <recommendedName>
        <fullName evidence="9">Defective in germ line development protein 3</fullName>
    </recommendedName>
    <alternativeName>
        <fullName evidence="9">Germline development defective 3</fullName>
    </alternativeName>
</protein>
<accession>Q95ZK7</accession>
<accession>Q95ZK6</accession>
<feature type="chain" id="PRO_0000418087" description="Defective in germ line development protein 3">
    <location>
        <begin position="1"/>
        <end position="969"/>
    </location>
</feature>
<feature type="domain" description="KH 1" evidence="6">
    <location>
        <begin position="34"/>
        <end position="109"/>
    </location>
</feature>
<feature type="domain" description="KH 2" evidence="6">
    <location>
        <begin position="113"/>
        <end position="187"/>
    </location>
</feature>
<feature type="domain" description="KH 3" evidence="6">
    <location>
        <begin position="189"/>
        <end position="259"/>
    </location>
</feature>
<feature type="domain" description="KH 4" evidence="6">
    <location>
        <begin position="270"/>
        <end position="342"/>
    </location>
</feature>
<feature type="domain" description="KH 5" evidence="6">
    <location>
        <begin position="344"/>
        <end position="419"/>
    </location>
</feature>
<feature type="region of interest" description="gld-2-binding" evidence="5">
    <location>
        <begin position="34"/>
        <end position="81"/>
    </location>
</feature>
<feature type="region of interest" description="gls-1-binding" evidence="5">
    <location>
        <begin position="57"/>
        <end position="471"/>
    </location>
</feature>
<feature type="region of interest" description="Disordered" evidence="1">
    <location>
        <begin position="459"/>
        <end position="508"/>
    </location>
</feature>
<feature type="region of interest" description="Disordered" evidence="1">
    <location>
        <begin position="602"/>
        <end position="711"/>
    </location>
</feature>
<feature type="region of interest" description="gls-1-binding" evidence="5">
    <location>
        <begin position="769"/>
        <end position="969"/>
    </location>
</feature>
<feature type="region of interest" description="fbf-1-binding" evidence="3">
    <location>
        <begin position="860"/>
        <end position="949"/>
    </location>
</feature>
<feature type="region of interest" description="Disordered" evidence="1">
    <location>
        <begin position="950"/>
        <end position="969"/>
    </location>
</feature>
<feature type="compositionally biased region" description="Polar residues" evidence="1">
    <location>
        <begin position="487"/>
        <end position="508"/>
    </location>
</feature>
<feature type="compositionally biased region" description="Low complexity" evidence="1">
    <location>
        <begin position="631"/>
        <end position="644"/>
    </location>
</feature>
<feature type="compositionally biased region" description="Basic and acidic residues" evidence="1">
    <location>
        <begin position="647"/>
        <end position="659"/>
    </location>
</feature>
<feature type="compositionally biased region" description="Polar residues" evidence="1">
    <location>
        <begin position="664"/>
        <end position="676"/>
    </location>
</feature>
<feature type="compositionally biased region" description="Basic and acidic residues" evidence="1">
    <location>
        <begin position="677"/>
        <end position="687"/>
    </location>
</feature>
<feature type="compositionally biased region" description="Basic and acidic residues" evidence="1">
    <location>
        <begin position="694"/>
        <end position="711"/>
    </location>
</feature>
<feature type="compositionally biased region" description="Polar residues" evidence="1">
    <location>
        <begin position="954"/>
        <end position="969"/>
    </location>
</feature>
<feature type="splice variant" id="VSP_043966" description="In isoform b." evidence="9 10">
    <original>VSALPFADPVVFDGFPYVHGLFPVNEAEQHRNHRESSPSLRSTQEIRKPSRNMGNRPSSSTGSYYPSTTPRQRVYEQVREDDLRSHIGSRRTSVNGDDQNVESMHDQGYERQYPRQHQRLQKDDQQRWKTGSRGDIHSSRTINVHRDVRNSNEYDFHVGNSGPAKRSPSLEQVQLQMTH</original>
    <variation>GARYSSNIYPFSYIVPQNFNFLNGNFG</variation>
    <location>
        <begin position="575"/>
        <end position="753"/>
    </location>
</feature>
<feature type="mutagenesis site" description="Abolishes binding to gls-1." evidence="5">
    <original>G</original>
    <variation>R</variation>
    <location>
        <position position="327"/>
    </location>
</feature>
<feature type="helix" evidence="16">
    <location>
        <begin position="28"/>
        <end position="40"/>
    </location>
</feature>
<feature type="turn" evidence="16">
    <location>
        <begin position="41"/>
        <end position="43"/>
    </location>
</feature>
<feature type="helix" evidence="16">
    <location>
        <begin position="48"/>
        <end position="55"/>
    </location>
</feature>
<feature type="helix" evidence="16">
    <location>
        <begin position="63"/>
        <end position="65"/>
    </location>
</feature>
<feature type="helix" evidence="16">
    <location>
        <begin position="67"/>
        <end position="82"/>
    </location>
</feature>
<feature type="strand" evidence="15">
    <location>
        <begin position="113"/>
        <end position="119"/>
    </location>
</feature>
<feature type="helix" evidence="15">
    <location>
        <begin position="122"/>
        <end position="124"/>
    </location>
</feature>
<feature type="helix" evidence="15">
    <location>
        <begin position="125"/>
        <end position="129"/>
    </location>
</feature>
<feature type="strand" evidence="15">
    <location>
        <begin position="133"/>
        <end position="135"/>
    </location>
</feature>
<feature type="helix" evidence="15">
    <location>
        <begin position="138"/>
        <end position="145"/>
    </location>
</feature>
<feature type="strand" evidence="15">
    <location>
        <begin position="148"/>
        <end position="150"/>
    </location>
</feature>
<feature type="strand" evidence="15">
    <location>
        <begin position="158"/>
        <end position="160"/>
    </location>
</feature>
<feature type="turn" evidence="15">
    <location>
        <begin position="163"/>
        <end position="166"/>
    </location>
</feature>
<feature type="strand" evidence="15">
    <location>
        <begin position="167"/>
        <end position="173"/>
    </location>
</feature>
<feature type="helix" evidence="15">
    <location>
        <begin position="174"/>
        <end position="186"/>
    </location>
</feature>
<feature type="strand" evidence="15">
    <location>
        <begin position="189"/>
        <end position="195"/>
    </location>
</feature>
<feature type="helix" evidence="15">
    <location>
        <begin position="203"/>
        <end position="212"/>
    </location>
</feature>
<feature type="strand" evidence="15">
    <location>
        <begin position="219"/>
        <end position="225"/>
    </location>
</feature>
<feature type="strand" evidence="15">
    <location>
        <begin position="233"/>
        <end position="241"/>
    </location>
</feature>
<feature type="helix" evidence="15">
    <location>
        <begin position="242"/>
        <end position="244"/>
    </location>
</feature>
<feature type="helix" evidence="15">
    <location>
        <begin position="245"/>
        <end position="259"/>
    </location>
</feature>
<feature type="strand" evidence="15">
    <location>
        <begin position="270"/>
        <end position="277"/>
    </location>
</feature>
<feature type="helix" evidence="15">
    <location>
        <begin position="278"/>
        <end position="280"/>
    </location>
</feature>
<feature type="helix" evidence="15">
    <location>
        <begin position="281"/>
        <end position="284"/>
    </location>
</feature>
<feature type="helix" evidence="15">
    <location>
        <begin position="293"/>
        <end position="301"/>
    </location>
</feature>
<feature type="strand" evidence="15">
    <location>
        <begin position="304"/>
        <end position="306"/>
    </location>
</feature>
<feature type="strand" evidence="15">
    <location>
        <begin position="320"/>
        <end position="327"/>
    </location>
</feature>
<feature type="helix" evidence="15">
    <location>
        <begin position="329"/>
        <end position="341"/>
    </location>
</feature>
<feature type="strand" evidence="15">
    <location>
        <begin position="343"/>
        <end position="352"/>
    </location>
</feature>
<feature type="helix" evidence="15">
    <location>
        <begin position="353"/>
        <end position="355"/>
    </location>
</feature>
<feature type="strand" evidence="15">
    <location>
        <begin position="367"/>
        <end position="371"/>
    </location>
</feature>
<feature type="strand" evidence="15">
    <location>
        <begin position="377"/>
        <end position="385"/>
    </location>
</feature>
<feature type="strand" evidence="15">
    <location>
        <begin position="388"/>
        <end position="391"/>
    </location>
</feature>
<feature type="strand" evidence="15">
    <location>
        <begin position="395"/>
        <end position="405"/>
    </location>
</feature>
<feature type="helix" evidence="15">
    <location>
        <begin position="406"/>
        <end position="408"/>
    </location>
</feature>
<feature type="helix" evidence="15">
    <location>
        <begin position="409"/>
        <end position="419"/>
    </location>
</feature>
<feature type="helix" evidence="15">
    <location>
        <begin position="422"/>
        <end position="424"/>
    </location>
</feature>
<feature type="turn" evidence="15">
    <location>
        <begin position="433"/>
        <end position="436"/>
    </location>
</feature>
<feature type="helix" evidence="15">
    <location>
        <begin position="438"/>
        <end position="440"/>
    </location>
</feature>
<feature type="helix" evidence="15">
    <location>
        <begin position="445"/>
        <end position="448"/>
    </location>
</feature>
<evidence type="ECO:0000256" key="1">
    <source>
        <dbReference type="SAM" id="MobiDB-lite"/>
    </source>
</evidence>
<evidence type="ECO:0000269" key="2">
    <source>
    </source>
</evidence>
<evidence type="ECO:0000269" key="3">
    <source>
    </source>
</evidence>
<evidence type="ECO:0000269" key="4">
    <source>
    </source>
</evidence>
<evidence type="ECO:0000269" key="5">
    <source>
    </source>
</evidence>
<evidence type="ECO:0000269" key="6">
    <source>
    </source>
</evidence>
<evidence type="ECO:0000269" key="7">
    <source>
    </source>
</evidence>
<evidence type="ECO:0000269" key="8">
    <source>
    </source>
</evidence>
<evidence type="ECO:0000303" key="9">
    <source>
    </source>
</evidence>
<evidence type="ECO:0000303" key="10">
    <source>
    </source>
</evidence>
<evidence type="ECO:0000305" key="11"/>
<evidence type="ECO:0000312" key="12">
    <source>
        <dbReference type="EMBL" id="CCD65918.1"/>
    </source>
</evidence>
<evidence type="ECO:0000312" key="13">
    <source>
        <dbReference type="PDB" id="3N89"/>
    </source>
</evidence>
<evidence type="ECO:0000312" key="14">
    <source>
        <dbReference type="WormBase" id="T07F8.3a"/>
    </source>
</evidence>
<evidence type="ECO:0007829" key="15">
    <source>
        <dbReference type="PDB" id="3N89"/>
    </source>
</evidence>
<evidence type="ECO:0007829" key="16">
    <source>
        <dbReference type="PDB" id="4ZRL"/>
    </source>
</evidence>
<dbReference type="EMBL" id="BX284602">
    <property type="protein sequence ID" value="CCD65916.1"/>
    <property type="molecule type" value="Genomic_DNA"/>
</dbReference>
<dbReference type="EMBL" id="BX284602">
    <property type="protein sequence ID" value="CCD65918.1"/>
    <property type="molecule type" value="Genomic_DNA"/>
</dbReference>
<dbReference type="RefSeq" id="NP_495479.2">
    <molecule id="Q95ZK7-1"/>
    <property type="nucleotide sequence ID" value="NM_063078.4"/>
</dbReference>
<dbReference type="RefSeq" id="NP_495480.1">
    <property type="nucleotide sequence ID" value="NM_063079.5"/>
</dbReference>
<dbReference type="PDB" id="3N89">
    <property type="method" value="X-ray"/>
    <property type="resolution" value="2.79 A"/>
    <property type="chains" value="A/B=88-460"/>
</dbReference>
<dbReference type="PDB" id="4ZRL">
    <property type="method" value="X-ray"/>
    <property type="resolution" value="2.28 A"/>
    <property type="chains" value="B=13-88"/>
</dbReference>
<dbReference type="PDBsum" id="3N89"/>
<dbReference type="PDBsum" id="4ZRL"/>
<dbReference type="SMR" id="Q95ZK7"/>
<dbReference type="BioGRID" id="39510">
    <property type="interactions" value="20"/>
</dbReference>
<dbReference type="ComplexPortal" id="CPX-1132">
    <property type="entry name" value="gls-1-gld-3 complex"/>
</dbReference>
<dbReference type="ComplexPortal" id="CPX-1214">
    <property type="entry name" value="GLD-2-GLD-3 complex"/>
</dbReference>
<dbReference type="DIP" id="DIP-25960N"/>
<dbReference type="FunCoup" id="Q95ZK7">
    <property type="interactions" value="1353"/>
</dbReference>
<dbReference type="IntAct" id="Q95ZK7">
    <property type="interactions" value="10"/>
</dbReference>
<dbReference type="STRING" id="6239.T07F8.3a.1"/>
<dbReference type="PaxDb" id="6239-T07F8.3a"/>
<dbReference type="PeptideAtlas" id="Q95ZK7"/>
<dbReference type="EnsemblMetazoa" id="T07F8.3a.1">
    <molecule id="Q95ZK7-1"/>
    <property type="protein sequence ID" value="T07F8.3a.1"/>
    <property type="gene ID" value="WBGene00001597"/>
</dbReference>
<dbReference type="EnsemblMetazoa" id="T07F8.3b.1">
    <property type="protein sequence ID" value="T07F8.3b.1"/>
    <property type="gene ID" value="WBGene00001597"/>
</dbReference>
<dbReference type="GeneID" id="174174"/>
<dbReference type="KEGG" id="cel:CELE_T07F8.3"/>
<dbReference type="UCSC" id="T07F8.3a">
    <property type="organism name" value="c. elegans"/>
</dbReference>
<dbReference type="AGR" id="WB:WBGene00001597"/>
<dbReference type="CTD" id="174174"/>
<dbReference type="WormBase" id="T07F8.3a">
    <molecule id="Q95ZK7-1"/>
    <property type="protein sequence ID" value="CE42163"/>
    <property type="gene ID" value="WBGene00001597"/>
    <property type="gene designation" value="gld-3"/>
</dbReference>
<dbReference type="WormBase" id="T07F8.3b">
    <property type="protein sequence ID" value="CE28652"/>
    <property type="gene ID" value="WBGene00001597"/>
    <property type="gene designation" value="gld-3"/>
</dbReference>
<dbReference type="eggNOG" id="ENOG502T0PW">
    <property type="taxonomic scope" value="Eukaryota"/>
</dbReference>
<dbReference type="HOGENOM" id="CLU_307611_0_0_1"/>
<dbReference type="InParanoid" id="Q95ZK7"/>
<dbReference type="OMA" id="YRIDPMK"/>
<dbReference type="OrthoDB" id="271862at2759"/>
<dbReference type="SignaLink" id="Q95ZK7"/>
<dbReference type="CD-CODE" id="73A75392">
    <property type="entry name" value="P-granule"/>
</dbReference>
<dbReference type="EvolutionaryTrace" id="Q95ZK7"/>
<dbReference type="PRO" id="PR:Q95ZK7"/>
<dbReference type="Proteomes" id="UP000001940">
    <property type="component" value="Chromosome II"/>
</dbReference>
<dbReference type="Bgee" id="WBGene00001597">
    <property type="expression patterns" value="Expressed in adult organism and 4 other cell types or tissues"/>
</dbReference>
<dbReference type="GO" id="GO:0005737">
    <property type="term" value="C:cytoplasm"/>
    <property type="evidence" value="ECO:0000314"/>
    <property type="project" value="WormBase"/>
</dbReference>
<dbReference type="GO" id="GO:0043186">
    <property type="term" value="C:P granule"/>
    <property type="evidence" value="ECO:0000314"/>
    <property type="project" value="WormBase"/>
</dbReference>
<dbReference type="GO" id="GO:0048471">
    <property type="term" value="C:perinuclear region of cytoplasm"/>
    <property type="evidence" value="ECO:0007669"/>
    <property type="project" value="UniProtKB-SubCell"/>
</dbReference>
<dbReference type="GO" id="GO:0030880">
    <property type="term" value="C:RNA polymerase complex"/>
    <property type="evidence" value="ECO:0000269"/>
    <property type="project" value="ComplexPortal"/>
</dbReference>
<dbReference type="GO" id="GO:0031379">
    <property type="term" value="C:RNA-directed RNA polymerase complex"/>
    <property type="evidence" value="ECO:0000353"/>
    <property type="project" value="WormBase"/>
</dbReference>
<dbReference type="GO" id="GO:1990749">
    <property type="term" value="F:polynucleotide adenylyltransferase activator activity"/>
    <property type="evidence" value="ECO:0000314"/>
    <property type="project" value="WormBase"/>
</dbReference>
<dbReference type="GO" id="GO:0019904">
    <property type="term" value="F:protein domain specific binding"/>
    <property type="evidence" value="ECO:0000353"/>
    <property type="project" value="WormBase"/>
</dbReference>
<dbReference type="GO" id="GO:0003723">
    <property type="term" value="F:RNA binding"/>
    <property type="evidence" value="ECO:0000250"/>
    <property type="project" value="WormBase"/>
</dbReference>
<dbReference type="GO" id="GO:0180011">
    <property type="term" value="P:cytosolic mRNA polyadenylation"/>
    <property type="evidence" value="ECO:0000314"/>
    <property type="project" value="WormBase"/>
</dbReference>
<dbReference type="GO" id="GO:0009792">
    <property type="term" value="P:embryo development ending in birth or egg hatching"/>
    <property type="evidence" value="ECO:0000315"/>
    <property type="project" value="WormBase"/>
</dbReference>
<dbReference type="GO" id="GO:0018992">
    <property type="term" value="P:germ-line sex determination"/>
    <property type="evidence" value="ECO:0000315"/>
    <property type="project" value="WormBase"/>
</dbReference>
<dbReference type="GO" id="GO:0042078">
    <property type="term" value="P:germ-line stem cell division"/>
    <property type="evidence" value="ECO:0000315"/>
    <property type="project" value="WormBase"/>
</dbReference>
<dbReference type="GO" id="GO:0042006">
    <property type="term" value="P:masculinization of hermaphroditic germ-line"/>
    <property type="evidence" value="ECO:0000315"/>
    <property type="project" value="WormBase"/>
</dbReference>
<dbReference type="GO" id="GO:0051321">
    <property type="term" value="P:meiotic cell cycle"/>
    <property type="evidence" value="ECO:0007669"/>
    <property type="project" value="UniProtKB-KW"/>
</dbReference>
<dbReference type="GO" id="GO:0000281">
    <property type="term" value="P:mitotic cytokinesis"/>
    <property type="evidence" value="ECO:0000315"/>
    <property type="project" value="WormBase"/>
</dbReference>
<dbReference type="GO" id="GO:0006397">
    <property type="term" value="P:mRNA processing"/>
    <property type="evidence" value="ECO:0000269"/>
    <property type="project" value="ComplexPortal"/>
</dbReference>
<dbReference type="GO" id="GO:0002119">
    <property type="term" value="P:nematode larval development"/>
    <property type="evidence" value="ECO:0000315"/>
    <property type="project" value="WormBase"/>
</dbReference>
<dbReference type="GO" id="GO:0000280">
    <property type="term" value="P:nuclear division"/>
    <property type="evidence" value="ECO:0000315"/>
    <property type="project" value="WormBase"/>
</dbReference>
<dbReference type="GO" id="GO:0010628">
    <property type="term" value="P:positive regulation of gene expression"/>
    <property type="evidence" value="ECO:0000315"/>
    <property type="project" value="ComplexPortal"/>
</dbReference>
<dbReference type="GO" id="GO:0060903">
    <property type="term" value="P:positive regulation of meiosis I"/>
    <property type="evidence" value="ECO:0000269"/>
    <property type="project" value="ComplexPortal"/>
</dbReference>
<dbReference type="GO" id="GO:0045836">
    <property type="term" value="P:positive regulation of meiotic nuclear division"/>
    <property type="evidence" value="ECO:0000315"/>
    <property type="project" value="WormBase"/>
</dbReference>
<dbReference type="GO" id="GO:0045840">
    <property type="term" value="P:positive regulation of mitotic nuclear division"/>
    <property type="evidence" value="ECO:0000269"/>
    <property type="project" value="ComplexPortal"/>
</dbReference>
<dbReference type="GO" id="GO:0040018">
    <property type="term" value="P:positive regulation of multicellular organism growth"/>
    <property type="evidence" value="ECO:0000315"/>
    <property type="project" value="WormBase"/>
</dbReference>
<dbReference type="GO" id="GO:0006417">
    <property type="term" value="P:regulation of translation"/>
    <property type="evidence" value="ECO:0000303"/>
    <property type="project" value="ComplexPortal"/>
</dbReference>
<dbReference type="GO" id="GO:0007283">
    <property type="term" value="P:spermatogenesis"/>
    <property type="evidence" value="ECO:0000315"/>
    <property type="project" value="WormBase"/>
</dbReference>
<dbReference type="GO" id="GO:0040025">
    <property type="term" value="P:vulval development"/>
    <property type="evidence" value="ECO:0000315"/>
    <property type="project" value="WormBase"/>
</dbReference>
<dbReference type="CDD" id="cd22441">
    <property type="entry name" value="KH-I_CeGLD3_rpt1"/>
    <property type="match status" value="1"/>
</dbReference>
<dbReference type="CDD" id="cd22442">
    <property type="entry name" value="KH-I_CeGLD3_rpt2"/>
    <property type="match status" value="1"/>
</dbReference>
<dbReference type="CDD" id="cd22443">
    <property type="entry name" value="KH-I_CeGLD3_rpt3"/>
    <property type="match status" value="1"/>
</dbReference>
<dbReference type="Gene3D" id="3.30.310.210">
    <property type="match status" value="1"/>
</dbReference>
<dbReference type="Gene3D" id="3.30.310.270">
    <property type="match status" value="1"/>
</dbReference>
<dbReference type="InterPro" id="IPR041194">
    <property type="entry name" value="GLD-3-like_KH5"/>
</dbReference>
<dbReference type="InterPro" id="IPR055002">
    <property type="entry name" value="GLD-3_KH2"/>
</dbReference>
<dbReference type="InterPro" id="IPR049309">
    <property type="entry name" value="GLD-3_KH3"/>
</dbReference>
<dbReference type="InterPro" id="IPR049310">
    <property type="entry name" value="GLD3_KH4"/>
</dbReference>
<dbReference type="InterPro" id="IPR055003">
    <property type="entry name" value="KH-I_CeGLD3_3rd"/>
</dbReference>
<dbReference type="Pfam" id="PF22801">
    <property type="entry name" value="KH_GLD-3_1st"/>
    <property type="match status" value="1"/>
</dbReference>
<dbReference type="Pfam" id="PF21482">
    <property type="entry name" value="KH_GLD-3_2nd"/>
    <property type="match status" value="1"/>
</dbReference>
<dbReference type="Pfam" id="PF22467">
    <property type="entry name" value="KH_GLD-3_3rd"/>
    <property type="match status" value="1"/>
</dbReference>
<dbReference type="Pfam" id="PF17905">
    <property type="entry name" value="KH_GLD-3_4th"/>
    <property type="match status" value="1"/>
</dbReference>
<reference evidence="11" key="1">
    <citation type="journal article" date="2002" name="Dev. Cell">
        <title>GLD-3, a bicaudal-C homolog that inhibits FBF to control germline sex determination in C. elegans.</title>
        <authorList>
            <person name="Eckmann C.R."/>
            <person name="Kraemer B."/>
            <person name="Wickens M."/>
            <person name="Kimble J."/>
        </authorList>
    </citation>
    <scope>NUCLEOTIDE SEQUENCE [MRNA] (ISOFORMS A AND B)</scope>
    <scope>ALTERNATIVE SPLICING</scope>
    <scope>FUNCTION</scope>
    <scope>INTERACTION WITH FBF-1 AND FBF-2</scope>
    <scope>SUBCELLULAR LOCATION</scope>
    <scope>TISSUE SPECIFICITY</scope>
    <scope>DEVELOPMENTAL STAGE</scope>
    <scope>DISRUPTION PHENOTYPE</scope>
</reference>
<reference evidence="12" key="2">
    <citation type="journal article" date="1998" name="Science">
        <title>Genome sequence of the nematode C. elegans: a platform for investigating biology.</title>
        <authorList>
            <consortium name="The C. elegans sequencing consortium"/>
        </authorList>
    </citation>
    <scope>NUCLEOTIDE SEQUENCE [LARGE SCALE GENOMIC DNA]</scope>
    <source>
        <strain>Bristol N2</strain>
    </source>
</reference>
<reference evidence="11" key="3">
    <citation type="journal article" date="2002" name="Nature">
        <title>A regulatory cytoplasmic poly(A) polymerase in Caenorhabditis elegans.</title>
        <authorList>
            <person name="Wang L."/>
            <person name="Eckmann C.R."/>
            <person name="Kadyk L.C."/>
            <person name="Wickens M."/>
            <person name="Kimble J."/>
        </authorList>
    </citation>
    <scope>INTERACTION WITH GLD-2</scope>
</reference>
<reference evidence="11" key="4">
    <citation type="journal article" date="2004" name="Genetics">
        <title>GLD-3 and control of the mitosis/meiosis decision in the germline of Caenorhabditis elegans.</title>
        <authorList>
            <person name="Eckmann C.R."/>
            <person name="Crittenden S.L."/>
            <person name="Suh N."/>
            <person name="Kimble J."/>
        </authorList>
    </citation>
    <scope>FUNCTION</scope>
    <scope>INTERACTION WITH GLD-2</scope>
    <scope>DISRUPTION PHENOTYPE</scope>
</reference>
<reference evidence="11" key="5">
    <citation type="journal article" date="2009" name="PLoS Genet.">
        <title>GLS-1, a novel P granule component, modulates a network of conserved RNA regulators to influence germ cell fate decisions.</title>
        <authorList>
            <person name="Rybarska A."/>
            <person name="Harterink M."/>
            <person name="Jedamzik B."/>
            <person name="Kupinski A.P."/>
            <person name="Schmid M."/>
            <person name="Eckmann C.R."/>
        </authorList>
    </citation>
    <scope>FUNCTION</scope>
    <scope>INTERACTION WITH GLS-1</scope>
    <scope>SUBCELLULAR LOCATION</scope>
    <scope>TISSUE SPECIFICITY</scope>
    <scope>DEVELOPMENTAL STAGE</scope>
    <scope>MUTAGENESIS OF GLY-327</scope>
</reference>
<reference key="6">
    <citation type="journal article" date="2015" name="Dev. Cell">
        <title>POS-1 Promotes Endo-mesoderm Development by Inhibiting the Cytoplasmic Polyadenylation of neg-1 mRNA.</title>
        <authorList>
            <person name="Elewa A."/>
            <person name="Shirayama M."/>
            <person name="Kaymak E."/>
            <person name="Harrison P.F."/>
            <person name="Powell D.R."/>
            <person name="Du Z."/>
            <person name="Chute C.D."/>
            <person name="Woolf H."/>
            <person name="Yi D."/>
            <person name="Ishidate T."/>
            <person name="Srinivasan J."/>
            <person name="Bao Z."/>
            <person name="Beilharz T.H."/>
            <person name="Ryder S.P."/>
            <person name="Mello C.C."/>
        </authorList>
    </citation>
    <scope>FUNCTION</scope>
    <scope>DISRUPTION PHENOTYPE</scope>
</reference>
<reference evidence="11 13" key="7">
    <citation type="journal article" date="2010" name="RNA">
        <title>Four KH domains of the C. elegans Bicaudal-C ortholog GLD-3 form a globular structural platform.</title>
        <authorList>
            <person name="Nakel K."/>
            <person name="Hartung S.A."/>
            <person name="Bonneau F."/>
            <person name="Eckmann C.R."/>
            <person name="Conti E."/>
        </authorList>
    </citation>
    <scope>X-RAY CRYSTALLOGRAPHY (2.79 ANGSTROMS) OF 88-460</scope>
    <scope>IDENTIFICATION BY MASS SPECTROMETRY</scope>
    <scope>INTERACTION WITH GLD-2</scope>
</reference>
<gene>
    <name evidence="14" type="primary">gld-3</name>
    <name type="ORF">T07F8.3</name>
</gene>
<name>GLD3_CAEEL</name>
<organism>
    <name type="scientific">Caenorhabditis elegans</name>
    <dbReference type="NCBI Taxonomy" id="6239"/>
    <lineage>
        <taxon>Eukaryota</taxon>
        <taxon>Metazoa</taxon>
        <taxon>Ecdysozoa</taxon>
        <taxon>Nematoda</taxon>
        <taxon>Chromadorea</taxon>
        <taxon>Rhabditida</taxon>
        <taxon>Rhabditina</taxon>
        <taxon>Rhabditomorpha</taxon>
        <taxon>Rhabditoidea</taxon>
        <taxon>Rhabditidae</taxon>
        <taxon>Peloderinae</taxon>
        <taxon>Caenorhabditis</taxon>
    </lineage>
</organism>